<evidence type="ECO:0000255" key="1">
    <source>
        <dbReference type="HAMAP-Rule" id="MF_03175"/>
    </source>
</evidence>
<evidence type="ECO:0000256" key="2">
    <source>
        <dbReference type="SAM" id="MobiDB-lite"/>
    </source>
</evidence>
<evidence type="ECO:0000305" key="3"/>
<proteinExistence type="inferred from homology"/>
<comment type="function">
    <text evidence="1">Cotranslationally removes the N-terminal methionine from nascent proteins. The N-terminal methionine is often cleaved when the second residue in the primary sequence is small and uncharged (Met-Ala-, Cys, Gly, Pro, Ser, Thr, or Val).</text>
</comment>
<comment type="catalytic activity">
    <reaction evidence="1">
        <text>Release of N-terminal amino acids, preferentially methionine, from peptides and arylamides.</text>
        <dbReference type="EC" id="3.4.11.18"/>
    </reaction>
</comment>
<comment type="cofactor">
    <cofactor evidence="1">
        <name>Co(2+)</name>
        <dbReference type="ChEBI" id="CHEBI:48828"/>
    </cofactor>
    <cofactor evidence="1">
        <name>Zn(2+)</name>
        <dbReference type="ChEBI" id="CHEBI:29105"/>
    </cofactor>
    <cofactor evidence="1">
        <name>Mn(2+)</name>
        <dbReference type="ChEBI" id="CHEBI:29035"/>
    </cofactor>
    <cofactor evidence="1">
        <name>Fe(2+)</name>
        <dbReference type="ChEBI" id="CHEBI:29033"/>
    </cofactor>
    <text evidence="1">Binds 2 divalent metal cations per subunit. Has a high-affinity and a low affinity metal-binding site. The true nature of the physiological cofactor is under debate. The enzyme is active with cobalt, zinc, manganese or divalent iron ions. Most likely, methionine aminopeptidases function as mononuclear Fe(2+)-metalloproteases under physiological conditions, and the catalytically relevant metal-binding site has been assigned to the histidine-containing high-affinity site.</text>
</comment>
<comment type="subcellular location">
    <subcellularLocation>
        <location evidence="1">Cytoplasm</location>
    </subcellularLocation>
</comment>
<comment type="similarity">
    <text evidence="1">Belongs to the peptidase M24A family. Methionine aminopeptidase eukaryotic type 2 subfamily.</text>
</comment>
<comment type="sequence caution" evidence="3">
    <conflict type="erroneous gene model prediction">
        <sequence resource="EMBL-CDS" id="EFE30529"/>
    </conflict>
</comment>
<name>MAP2_ARTBC</name>
<dbReference type="EC" id="3.4.11.18" evidence="1"/>
<dbReference type="EMBL" id="ABSU01000029">
    <property type="protein sequence ID" value="EFE30529.1"/>
    <property type="status" value="ALT_SEQ"/>
    <property type="molecule type" value="Genomic_DNA"/>
</dbReference>
<dbReference type="RefSeq" id="XP_003011169.1">
    <property type="nucleotide sequence ID" value="XM_003011123.1"/>
</dbReference>
<dbReference type="SMR" id="D4B2G3"/>
<dbReference type="STRING" id="663331.D4B2G3"/>
<dbReference type="MEROPS" id="M24.A02"/>
<dbReference type="GeneID" id="9523824"/>
<dbReference type="KEGG" id="abe:ARB_02691"/>
<dbReference type="eggNOG" id="KOG2775">
    <property type="taxonomic scope" value="Eukaryota"/>
</dbReference>
<dbReference type="HOGENOM" id="CLU_015857_7_1_1"/>
<dbReference type="OrthoDB" id="7848262at2759"/>
<dbReference type="Proteomes" id="UP000008866">
    <property type="component" value="Unassembled WGS sequence"/>
</dbReference>
<dbReference type="GO" id="GO:0005737">
    <property type="term" value="C:cytoplasm"/>
    <property type="evidence" value="ECO:0007669"/>
    <property type="project" value="UniProtKB-SubCell"/>
</dbReference>
<dbReference type="GO" id="GO:0004239">
    <property type="term" value="F:initiator methionyl aminopeptidase activity"/>
    <property type="evidence" value="ECO:0007669"/>
    <property type="project" value="UniProtKB-UniRule"/>
</dbReference>
<dbReference type="GO" id="GO:0046872">
    <property type="term" value="F:metal ion binding"/>
    <property type="evidence" value="ECO:0007669"/>
    <property type="project" value="UniProtKB-UniRule"/>
</dbReference>
<dbReference type="GO" id="GO:0070006">
    <property type="term" value="F:metalloaminopeptidase activity"/>
    <property type="evidence" value="ECO:0007669"/>
    <property type="project" value="UniProtKB-UniRule"/>
</dbReference>
<dbReference type="GO" id="GO:0006508">
    <property type="term" value="P:proteolysis"/>
    <property type="evidence" value="ECO:0007669"/>
    <property type="project" value="UniProtKB-KW"/>
</dbReference>
<dbReference type="CDD" id="cd01088">
    <property type="entry name" value="MetAP2"/>
    <property type="match status" value="1"/>
</dbReference>
<dbReference type="Gene3D" id="3.90.230.10">
    <property type="entry name" value="Creatinase/methionine aminopeptidase superfamily"/>
    <property type="match status" value="1"/>
</dbReference>
<dbReference type="Gene3D" id="1.10.10.10">
    <property type="entry name" value="Winged helix-like DNA-binding domain superfamily/Winged helix DNA-binding domain"/>
    <property type="match status" value="1"/>
</dbReference>
<dbReference type="HAMAP" id="MF_03175">
    <property type="entry name" value="MetAP_2_euk"/>
    <property type="match status" value="1"/>
</dbReference>
<dbReference type="InterPro" id="IPR036005">
    <property type="entry name" value="Creatinase/aminopeptidase-like"/>
</dbReference>
<dbReference type="InterPro" id="IPR050247">
    <property type="entry name" value="Met_Aminopeptidase_Type2"/>
</dbReference>
<dbReference type="InterPro" id="IPR000994">
    <property type="entry name" value="Pept_M24"/>
</dbReference>
<dbReference type="InterPro" id="IPR001714">
    <property type="entry name" value="Pept_M24_MAP"/>
</dbReference>
<dbReference type="InterPro" id="IPR002468">
    <property type="entry name" value="Pept_M24A_MAP2"/>
</dbReference>
<dbReference type="InterPro" id="IPR018349">
    <property type="entry name" value="Pept_M24A_MAP2_BS"/>
</dbReference>
<dbReference type="InterPro" id="IPR036388">
    <property type="entry name" value="WH-like_DNA-bd_sf"/>
</dbReference>
<dbReference type="InterPro" id="IPR036390">
    <property type="entry name" value="WH_DNA-bd_sf"/>
</dbReference>
<dbReference type="NCBIfam" id="TIGR00501">
    <property type="entry name" value="met_pdase_II"/>
    <property type="match status" value="1"/>
</dbReference>
<dbReference type="PANTHER" id="PTHR45777">
    <property type="entry name" value="METHIONINE AMINOPEPTIDASE 2"/>
    <property type="match status" value="1"/>
</dbReference>
<dbReference type="PANTHER" id="PTHR45777:SF2">
    <property type="entry name" value="METHIONINE AMINOPEPTIDASE 2"/>
    <property type="match status" value="1"/>
</dbReference>
<dbReference type="Pfam" id="PF00557">
    <property type="entry name" value="Peptidase_M24"/>
    <property type="match status" value="1"/>
</dbReference>
<dbReference type="PRINTS" id="PR00599">
    <property type="entry name" value="MAPEPTIDASE"/>
</dbReference>
<dbReference type="SUPFAM" id="SSF55920">
    <property type="entry name" value="Creatinase/aminopeptidase"/>
    <property type="match status" value="1"/>
</dbReference>
<dbReference type="SUPFAM" id="SSF46785">
    <property type="entry name" value="Winged helix' DNA-binding domain"/>
    <property type="match status" value="1"/>
</dbReference>
<dbReference type="PROSITE" id="PS01202">
    <property type="entry name" value="MAP_2"/>
    <property type="match status" value="1"/>
</dbReference>
<feature type="chain" id="PRO_0000407642" description="Methionine aminopeptidase 2">
    <location>
        <begin position="1"/>
        <end position="449"/>
    </location>
</feature>
<feature type="region of interest" description="Disordered" evidence="2">
    <location>
        <begin position="1"/>
        <end position="91"/>
    </location>
</feature>
<feature type="compositionally biased region" description="Acidic residues" evidence="2">
    <location>
        <begin position="34"/>
        <end position="50"/>
    </location>
</feature>
<feature type="compositionally biased region" description="Basic residues" evidence="2">
    <location>
        <begin position="61"/>
        <end position="75"/>
    </location>
</feature>
<feature type="binding site" evidence="1">
    <location>
        <position position="199"/>
    </location>
    <ligand>
        <name>substrate</name>
    </ligand>
</feature>
<feature type="binding site" evidence="1">
    <location>
        <position position="219"/>
    </location>
    <ligand>
        <name>a divalent metal cation</name>
        <dbReference type="ChEBI" id="CHEBI:60240"/>
        <label>1</label>
    </ligand>
</feature>
<feature type="binding site" evidence="1">
    <location>
        <position position="230"/>
    </location>
    <ligand>
        <name>a divalent metal cation</name>
        <dbReference type="ChEBI" id="CHEBI:60240"/>
        <label>1</label>
    </ligand>
</feature>
<feature type="binding site" evidence="1">
    <location>
        <position position="230"/>
    </location>
    <ligand>
        <name>a divalent metal cation</name>
        <dbReference type="ChEBI" id="CHEBI:60240"/>
        <label>2</label>
        <note>catalytic</note>
    </ligand>
</feature>
<feature type="binding site" evidence="1">
    <location>
        <position position="299"/>
    </location>
    <ligand>
        <name>a divalent metal cation</name>
        <dbReference type="ChEBI" id="CHEBI:60240"/>
        <label>2</label>
        <note>catalytic</note>
    </ligand>
</feature>
<feature type="binding site" evidence="1">
    <location>
        <position position="307"/>
    </location>
    <ligand>
        <name>substrate</name>
    </ligand>
</feature>
<feature type="binding site" evidence="1">
    <location>
        <position position="335"/>
    </location>
    <ligand>
        <name>a divalent metal cation</name>
        <dbReference type="ChEBI" id="CHEBI:60240"/>
        <label>2</label>
        <note>catalytic</note>
    </ligand>
</feature>
<feature type="binding site" evidence="1">
    <location>
        <position position="430"/>
    </location>
    <ligand>
        <name>a divalent metal cation</name>
        <dbReference type="ChEBI" id="CHEBI:60240"/>
        <label>1</label>
    </ligand>
</feature>
<feature type="binding site" evidence="1">
    <location>
        <position position="430"/>
    </location>
    <ligand>
        <name>a divalent metal cation</name>
        <dbReference type="ChEBI" id="CHEBI:60240"/>
        <label>2</label>
        <note>catalytic</note>
    </ligand>
</feature>
<accession>D4B2G3</accession>
<reference key="1">
    <citation type="journal article" date="2011" name="Genome Biol.">
        <title>Comparative and functional genomics provide insights into the pathogenicity of dermatophytic fungi.</title>
        <authorList>
            <person name="Burmester A."/>
            <person name="Shelest E."/>
            <person name="Gloeckner G."/>
            <person name="Heddergott C."/>
            <person name="Schindler S."/>
            <person name="Staib P."/>
            <person name="Heidel A."/>
            <person name="Felder M."/>
            <person name="Petzold A."/>
            <person name="Szafranski K."/>
            <person name="Feuermann M."/>
            <person name="Pedruzzi I."/>
            <person name="Priebe S."/>
            <person name="Groth M."/>
            <person name="Winkler R."/>
            <person name="Li W."/>
            <person name="Kniemeyer O."/>
            <person name="Schroeckh V."/>
            <person name="Hertweck C."/>
            <person name="Hube B."/>
            <person name="White T.C."/>
            <person name="Platzer M."/>
            <person name="Guthke R."/>
            <person name="Heitman J."/>
            <person name="Woestemeyer J."/>
            <person name="Zipfel P.F."/>
            <person name="Monod M."/>
            <person name="Brakhage A.A."/>
        </authorList>
    </citation>
    <scope>NUCLEOTIDE SEQUENCE [LARGE SCALE GENOMIC DNA]</scope>
    <source>
        <strain>ATCC MYA-4681 / CBS 112371</strain>
    </source>
</reference>
<sequence>MAAQAAPELAKLDLNKNTGSVEANAVSAGGSEKEEAENEGDSDDDRDDEQAGGSAEVNAEKKKKKKRPKKKKKTAKVQSSPPRIPLTTLFPNSNFPEGEIVEYLNENSYRTTNEEKRHLDRMNNDFLTEYRQAAEIHRQVRQYAQKELIKPGATLTDIAEGIEDGVRHLTGHMGLEEGDSLVAGMGFPTGLNINHCAAHYSPNAGNKVVLQHGDVMKVDFGVHINGRIVDSAFTVAFDPVFDPLLTAVKEATNTGIKEAGIDVRMSDIGAAIQETMESYELELNGTSYPIKAIRNLNGHTIGQYEIHGGVNGKSVPIVKGGDQTKMEEGETYAIETFGSTGKGYVRDDMETSHYAKVPNAPSVPLRLSSAKNLYSLINKNFGTLPFCRRYLDRLGQEKYLLGLNNLVSSGLVDAYPPLCDVKGSYTAQFEHTILLRPNVKEVISRGDDY</sequence>
<keyword id="KW-0031">Aminopeptidase</keyword>
<keyword id="KW-0963">Cytoplasm</keyword>
<keyword id="KW-0378">Hydrolase</keyword>
<keyword id="KW-0479">Metal-binding</keyword>
<keyword id="KW-0645">Protease</keyword>
<keyword id="KW-1185">Reference proteome</keyword>
<organism>
    <name type="scientific">Arthroderma benhamiae (strain ATCC MYA-4681 / CBS 112371)</name>
    <name type="common">Trichophyton mentagrophytes</name>
    <dbReference type="NCBI Taxonomy" id="663331"/>
    <lineage>
        <taxon>Eukaryota</taxon>
        <taxon>Fungi</taxon>
        <taxon>Dikarya</taxon>
        <taxon>Ascomycota</taxon>
        <taxon>Pezizomycotina</taxon>
        <taxon>Eurotiomycetes</taxon>
        <taxon>Eurotiomycetidae</taxon>
        <taxon>Onygenales</taxon>
        <taxon>Arthrodermataceae</taxon>
        <taxon>Trichophyton</taxon>
    </lineage>
</organism>
<gene>
    <name type="ORF">ARB_02691</name>
</gene>
<protein>
    <recommendedName>
        <fullName evidence="1">Methionine aminopeptidase 2</fullName>
        <shortName evidence="1">MAP 2</shortName>
        <shortName evidence="1">MetAP 2</shortName>
        <ecNumber evidence="1">3.4.11.18</ecNumber>
    </recommendedName>
    <alternativeName>
        <fullName evidence="1">Peptidase M</fullName>
    </alternativeName>
</protein>